<dbReference type="EC" id="1.6.5.2" evidence="1"/>
<dbReference type="EMBL" id="CP000653">
    <property type="protein sequence ID" value="ABP62425.1"/>
    <property type="molecule type" value="Genomic_DNA"/>
</dbReference>
<dbReference type="SMR" id="A4WFE5"/>
<dbReference type="STRING" id="399742.Ent638_3769"/>
<dbReference type="KEGG" id="ent:Ent638_3769"/>
<dbReference type="eggNOG" id="COG2249">
    <property type="taxonomic scope" value="Bacteria"/>
</dbReference>
<dbReference type="HOGENOM" id="CLU_058643_0_1_6"/>
<dbReference type="Proteomes" id="UP000000230">
    <property type="component" value="Chromosome"/>
</dbReference>
<dbReference type="GO" id="GO:0005886">
    <property type="term" value="C:plasma membrane"/>
    <property type="evidence" value="ECO:0007669"/>
    <property type="project" value="UniProtKB-SubCell"/>
</dbReference>
<dbReference type="GO" id="GO:0009055">
    <property type="term" value="F:electron transfer activity"/>
    <property type="evidence" value="ECO:0007669"/>
    <property type="project" value="TreeGrafter"/>
</dbReference>
<dbReference type="GO" id="GO:0010181">
    <property type="term" value="F:FMN binding"/>
    <property type="evidence" value="ECO:0007669"/>
    <property type="project" value="TreeGrafter"/>
</dbReference>
<dbReference type="GO" id="GO:0050136">
    <property type="term" value="F:NADH:ubiquinone reductase (non-electrogenic) activity"/>
    <property type="evidence" value="ECO:0007669"/>
    <property type="project" value="RHEA"/>
</dbReference>
<dbReference type="GO" id="GO:0008753">
    <property type="term" value="F:NADPH dehydrogenase (quinone) activity"/>
    <property type="evidence" value="ECO:0007669"/>
    <property type="project" value="RHEA"/>
</dbReference>
<dbReference type="GO" id="GO:1901381">
    <property type="term" value="P:positive regulation of potassium ion transmembrane transport"/>
    <property type="evidence" value="ECO:0007669"/>
    <property type="project" value="UniProtKB-UniRule"/>
</dbReference>
<dbReference type="GO" id="GO:0006813">
    <property type="term" value="P:potassium ion transport"/>
    <property type="evidence" value="ECO:0007669"/>
    <property type="project" value="InterPro"/>
</dbReference>
<dbReference type="FunFam" id="3.40.50.360:FF:000013">
    <property type="entry name" value="Glutathione-regulated potassium-efflux system ancillary protein KefG"/>
    <property type="match status" value="1"/>
</dbReference>
<dbReference type="Gene3D" id="3.40.50.360">
    <property type="match status" value="1"/>
</dbReference>
<dbReference type="HAMAP" id="MF_01415">
    <property type="entry name" value="K_H_efflux_KefG"/>
    <property type="match status" value="1"/>
</dbReference>
<dbReference type="InterPro" id="IPR003680">
    <property type="entry name" value="Flavodoxin_fold"/>
</dbReference>
<dbReference type="InterPro" id="IPR029039">
    <property type="entry name" value="Flavoprotein-like_sf"/>
</dbReference>
<dbReference type="InterPro" id="IPR023947">
    <property type="entry name" value="K_H_efflux_KefG"/>
</dbReference>
<dbReference type="InterPro" id="IPR046980">
    <property type="entry name" value="KefG/KefF"/>
</dbReference>
<dbReference type="NCBIfam" id="NF003430">
    <property type="entry name" value="PRK04930.1"/>
    <property type="match status" value="1"/>
</dbReference>
<dbReference type="PANTHER" id="PTHR47307">
    <property type="entry name" value="GLUTATHIONE-REGULATED POTASSIUM-EFFLUX SYSTEM ANCILLARY PROTEIN KEFG"/>
    <property type="match status" value="1"/>
</dbReference>
<dbReference type="PANTHER" id="PTHR47307:SF1">
    <property type="entry name" value="GLUTATHIONE-REGULATED POTASSIUM-EFFLUX SYSTEM ANCILLARY PROTEIN KEFG"/>
    <property type="match status" value="1"/>
</dbReference>
<dbReference type="Pfam" id="PF02525">
    <property type="entry name" value="Flavodoxin_2"/>
    <property type="match status" value="1"/>
</dbReference>
<dbReference type="SUPFAM" id="SSF52218">
    <property type="entry name" value="Flavoproteins"/>
    <property type="match status" value="1"/>
</dbReference>
<keyword id="KW-0997">Cell inner membrane</keyword>
<keyword id="KW-1003">Cell membrane</keyword>
<keyword id="KW-0472">Membrane</keyword>
<keyword id="KW-0520">NAD</keyword>
<keyword id="KW-0560">Oxidoreductase</keyword>
<feature type="chain" id="PRO_1000068480" description="Glutathione-regulated potassium-efflux system ancillary protein KefG">
    <location>
        <begin position="1"/>
        <end position="183"/>
    </location>
</feature>
<sequence>MSQTAKVLLLYAHPESQDSVANRVLLKPAQQLSNVTVHDLYAHYPDFFIDIPREQELLRQHDVIVFQHPLYTYSCPALLKEWLDRVLSRGFSSGPGGNQLAGKYWRSVITTGEPESAYRHDSLNRYPMSDILRPFELTAAMCRMHWMSPMIVYWARRQQPQALASHAKAYGEWLASPIPTGGH</sequence>
<comment type="function">
    <text evidence="1">Regulatory subunit of a potassium efflux system that confers protection against electrophiles. Required for full activity of KefB.</text>
</comment>
<comment type="catalytic activity">
    <reaction evidence="1">
        <text>a quinone + NADH + H(+) = a quinol + NAD(+)</text>
        <dbReference type="Rhea" id="RHEA:46160"/>
        <dbReference type="ChEBI" id="CHEBI:15378"/>
        <dbReference type="ChEBI" id="CHEBI:24646"/>
        <dbReference type="ChEBI" id="CHEBI:57540"/>
        <dbReference type="ChEBI" id="CHEBI:57945"/>
        <dbReference type="ChEBI" id="CHEBI:132124"/>
        <dbReference type="EC" id="1.6.5.2"/>
    </reaction>
</comment>
<comment type="catalytic activity">
    <reaction evidence="1">
        <text>a quinone + NADPH + H(+) = a quinol + NADP(+)</text>
        <dbReference type="Rhea" id="RHEA:46164"/>
        <dbReference type="ChEBI" id="CHEBI:15378"/>
        <dbReference type="ChEBI" id="CHEBI:24646"/>
        <dbReference type="ChEBI" id="CHEBI:57783"/>
        <dbReference type="ChEBI" id="CHEBI:58349"/>
        <dbReference type="ChEBI" id="CHEBI:132124"/>
        <dbReference type="EC" id="1.6.5.2"/>
    </reaction>
</comment>
<comment type="subunit">
    <text evidence="1">Interacts with KefB.</text>
</comment>
<comment type="subcellular location">
    <subcellularLocation>
        <location evidence="1">Cell inner membrane</location>
        <topology evidence="1">Peripheral membrane protein</topology>
        <orientation evidence="1">Cytoplasmic side</orientation>
    </subcellularLocation>
</comment>
<comment type="similarity">
    <text evidence="1">Belongs to the NAD(P)H dehydrogenase (quinone) family. KefG subfamily.</text>
</comment>
<name>KEFG_ENT38</name>
<organism>
    <name type="scientific">Enterobacter sp. (strain 638)</name>
    <dbReference type="NCBI Taxonomy" id="399742"/>
    <lineage>
        <taxon>Bacteria</taxon>
        <taxon>Pseudomonadati</taxon>
        <taxon>Pseudomonadota</taxon>
        <taxon>Gammaproteobacteria</taxon>
        <taxon>Enterobacterales</taxon>
        <taxon>Enterobacteriaceae</taxon>
        <taxon>Enterobacter</taxon>
    </lineage>
</organism>
<reference key="1">
    <citation type="journal article" date="2010" name="PLoS Genet.">
        <title>Genome sequence of the plant growth promoting endophytic bacterium Enterobacter sp. 638.</title>
        <authorList>
            <person name="Taghavi S."/>
            <person name="van der Lelie D."/>
            <person name="Hoffman A."/>
            <person name="Zhang Y.B."/>
            <person name="Walla M.D."/>
            <person name="Vangronsveld J."/>
            <person name="Newman L."/>
            <person name="Monchy S."/>
        </authorList>
    </citation>
    <scope>NUCLEOTIDE SEQUENCE [LARGE SCALE GENOMIC DNA]</scope>
    <source>
        <strain>638</strain>
    </source>
</reference>
<gene>
    <name evidence="1" type="primary">kefG</name>
    <name type="ordered locus">Ent638_3769</name>
</gene>
<accession>A4WFE5</accession>
<protein>
    <recommendedName>
        <fullName evidence="1">Glutathione-regulated potassium-efflux system ancillary protein KefG</fullName>
    </recommendedName>
    <alternativeName>
        <fullName evidence="1">Putative quinone oxidoreductase KefG</fullName>
        <ecNumber evidence="1">1.6.5.2</ecNumber>
    </alternativeName>
</protein>
<proteinExistence type="inferred from homology"/>
<evidence type="ECO:0000255" key="1">
    <source>
        <dbReference type="HAMAP-Rule" id="MF_01415"/>
    </source>
</evidence>